<accession>Q7ZWM4</accession>
<reference key="1">
    <citation type="submission" date="2003-02" db="EMBL/GenBank/DDBJ databases">
        <authorList>
            <consortium name="NIH - Xenopus Gene Collection (XGC) project"/>
        </authorList>
    </citation>
    <scope>NUCLEOTIDE SEQUENCE [LARGE SCALE MRNA]</scope>
    <source>
        <tissue>Embryo</tissue>
    </source>
</reference>
<comment type="function">
    <text evidence="1">One of the enzymes of the urea cycle, the metabolic pathway transforming neurotoxic amonia produced by protein catabolism into inocuous urea in the liver of ureotelic animals. Catalyzes the formation of arginosuccinate from aspartate, citrulline and ATP and together with ASL it is responsible for the biosynthesis of arginine in most body tissues.</text>
</comment>
<comment type="catalytic activity">
    <reaction evidence="1">
        <text>L-citrulline + L-aspartate + ATP = 2-(N(omega)-L-arginino)succinate + AMP + diphosphate + H(+)</text>
        <dbReference type="Rhea" id="RHEA:10932"/>
        <dbReference type="ChEBI" id="CHEBI:15378"/>
        <dbReference type="ChEBI" id="CHEBI:29991"/>
        <dbReference type="ChEBI" id="CHEBI:30616"/>
        <dbReference type="ChEBI" id="CHEBI:33019"/>
        <dbReference type="ChEBI" id="CHEBI:57472"/>
        <dbReference type="ChEBI" id="CHEBI:57743"/>
        <dbReference type="ChEBI" id="CHEBI:456215"/>
        <dbReference type="EC" id="6.3.4.5"/>
    </reaction>
</comment>
<comment type="pathway">
    <text evidence="1">Amino-acid biosynthesis; L-arginine biosynthesis; L-arginine from L-ornithine and carbamoyl phosphate: step 2/3.</text>
</comment>
<comment type="pathway">
    <text evidence="1">Nitrogen metabolism; urea cycle; (N(omega)-L-arginino)succinate from L-aspartate and L-citrulline: step 1/1.</text>
</comment>
<comment type="subunit">
    <text evidence="1">Homotetramer.</text>
</comment>
<comment type="subcellular location">
    <subcellularLocation>
        <location evidence="1">Cytoplasm</location>
        <location evidence="1">Cytosol</location>
    </subcellularLocation>
</comment>
<comment type="similarity">
    <text evidence="2">Belongs to the argininosuccinate synthase family.</text>
</comment>
<sequence>MSQSKGTVVLAYSGGLDTSCILVWLKEQGFDVIAYLANIGQNEDFEEARKKAVNLGAKKVYIEDIRQQFVEEYIWPAVQANAIYEDRYLLGTSLARPCIAKKQVEIAKKEAAEYVSHGATGKGNDQIRFELTCYSLYPEVKIIAPWRMPEFYNRFRGRSDLMEYAKKHNISVPVTPKSPWSMDENLMHISYEGGILENPKNHAPPGLYLKTKDPATSPDEPDILEIEFKKGVPVKVTNTKNKTQHSSSLALFCYLNEVAGKHGVGRIDIVENRFIGMKSRGIYETPAGTILYQAHLDIEAFTMDREMRKIKQQLSQRFAEQIYNGFWYSPECEFVRSCISKSQEMVEGKVLVSVLKGQVYVLGREAPHSLYNEELVSMDVQGDYDPADACGFIKINAVRLKEYHRLQKNKK</sequence>
<proteinExistence type="evidence at transcript level"/>
<gene>
    <name evidence="1" type="primary">ass1</name>
</gene>
<feature type="chain" id="PRO_0000321324" description="Argininosuccinate synthase">
    <location>
        <begin position="1"/>
        <end position="411"/>
    </location>
</feature>
<feature type="binding site" evidence="1">
    <location>
        <begin position="11"/>
        <end position="19"/>
    </location>
    <ligand>
        <name>ATP</name>
        <dbReference type="ChEBI" id="CHEBI:30616"/>
    </ligand>
</feature>
<feature type="binding site" evidence="1">
    <location>
        <position position="37"/>
    </location>
    <ligand>
        <name>ATP</name>
        <dbReference type="ChEBI" id="CHEBI:30616"/>
    </ligand>
</feature>
<feature type="binding site" evidence="1">
    <location>
        <position position="88"/>
    </location>
    <ligand>
        <name>L-citrulline</name>
        <dbReference type="ChEBI" id="CHEBI:57743"/>
    </ligand>
</feature>
<feature type="binding site" evidence="1">
    <location>
        <position position="93"/>
    </location>
    <ligand>
        <name>L-citrulline</name>
        <dbReference type="ChEBI" id="CHEBI:57743"/>
    </ligand>
</feature>
<feature type="binding site" evidence="1">
    <location>
        <begin position="116"/>
        <end position="124"/>
    </location>
    <ligand>
        <name>ATP</name>
        <dbReference type="ChEBI" id="CHEBI:30616"/>
    </ligand>
</feature>
<feature type="binding site" evidence="1">
    <location>
        <position position="120"/>
    </location>
    <ligand>
        <name>L-aspartate</name>
        <dbReference type="ChEBI" id="CHEBI:29991"/>
    </ligand>
</feature>
<feature type="binding site" evidence="1">
    <location>
        <position position="124"/>
    </location>
    <ligand>
        <name>L-aspartate</name>
        <dbReference type="ChEBI" id="CHEBI:29991"/>
    </ligand>
</feature>
<feature type="binding site" evidence="1">
    <location>
        <position position="124"/>
    </location>
    <ligand>
        <name>L-citrulline</name>
        <dbReference type="ChEBI" id="CHEBI:57743"/>
    </ligand>
</feature>
<feature type="binding site" evidence="1">
    <location>
        <position position="125"/>
    </location>
    <ligand>
        <name>L-aspartate</name>
        <dbReference type="ChEBI" id="CHEBI:29991"/>
    </ligand>
</feature>
<feature type="binding site" evidence="1">
    <location>
        <position position="128"/>
    </location>
    <ligand>
        <name>L-citrulline</name>
        <dbReference type="ChEBI" id="CHEBI:57743"/>
    </ligand>
</feature>
<feature type="binding site" evidence="1">
    <location>
        <position position="181"/>
    </location>
    <ligand>
        <name>L-citrulline</name>
        <dbReference type="ChEBI" id="CHEBI:57743"/>
    </ligand>
</feature>
<feature type="binding site" evidence="1">
    <location>
        <position position="190"/>
    </location>
    <ligand>
        <name>L-citrulline</name>
        <dbReference type="ChEBI" id="CHEBI:57743"/>
    </ligand>
</feature>
<feature type="binding site" evidence="1">
    <location>
        <position position="271"/>
    </location>
    <ligand>
        <name>L-citrulline</name>
        <dbReference type="ChEBI" id="CHEBI:57743"/>
    </ligand>
</feature>
<feature type="binding site" evidence="1">
    <location>
        <position position="283"/>
    </location>
    <ligand>
        <name>L-citrulline</name>
        <dbReference type="ChEBI" id="CHEBI:57743"/>
    </ligand>
</feature>
<dbReference type="EC" id="6.3.4.5" evidence="1"/>
<dbReference type="EMBL" id="BC046941">
    <property type="protein sequence ID" value="AAH46941.1"/>
    <property type="molecule type" value="mRNA"/>
</dbReference>
<dbReference type="RefSeq" id="NP_001080795.1">
    <property type="nucleotide sequence ID" value="NM_001087326.1"/>
</dbReference>
<dbReference type="SMR" id="Q7ZWM4"/>
<dbReference type="DNASU" id="380488"/>
<dbReference type="GeneID" id="380488"/>
<dbReference type="KEGG" id="xla:380488"/>
<dbReference type="AGR" id="Xenbase:XB-GENE-17340606"/>
<dbReference type="CTD" id="380488"/>
<dbReference type="Xenbase" id="XB-GENE-17340606">
    <property type="gene designation" value="ass1.L"/>
</dbReference>
<dbReference type="OrthoDB" id="1688907at2759"/>
<dbReference type="UniPathway" id="UPA00068">
    <property type="reaction ID" value="UER00113"/>
</dbReference>
<dbReference type="UniPathway" id="UPA00158">
    <property type="reaction ID" value="UER00272"/>
</dbReference>
<dbReference type="Proteomes" id="UP000186698">
    <property type="component" value="Chromosome 8L"/>
</dbReference>
<dbReference type="Bgee" id="380488">
    <property type="expression patterns" value="Expressed in camera-type eye and 15 other cell types or tissues"/>
</dbReference>
<dbReference type="GO" id="GO:0005737">
    <property type="term" value="C:cytoplasm"/>
    <property type="evidence" value="ECO:0000318"/>
    <property type="project" value="GO_Central"/>
</dbReference>
<dbReference type="GO" id="GO:0005829">
    <property type="term" value="C:cytosol"/>
    <property type="evidence" value="ECO:0007669"/>
    <property type="project" value="UniProtKB-SubCell"/>
</dbReference>
<dbReference type="GO" id="GO:0004055">
    <property type="term" value="F:argininosuccinate synthase activity"/>
    <property type="evidence" value="ECO:0000250"/>
    <property type="project" value="UniProtKB"/>
</dbReference>
<dbReference type="GO" id="GO:0005524">
    <property type="term" value="F:ATP binding"/>
    <property type="evidence" value="ECO:0007669"/>
    <property type="project" value="UniProtKB-KW"/>
</dbReference>
<dbReference type="GO" id="GO:0000053">
    <property type="term" value="P:argininosuccinate metabolic process"/>
    <property type="evidence" value="ECO:0000318"/>
    <property type="project" value="GO_Central"/>
</dbReference>
<dbReference type="GO" id="GO:0006526">
    <property type="term" value="P:L-arginine biosynthetic process"/>
    <property type="evidence" value="ECO:0000250"/>
    <property type="project" value="UniProtKB"/>
</dbReference>
<dbReference type="GO" id="GO:0000050">
    <property type="term" value="P:urea cycle"/>
    <property type="evidence" value="ECO:0000250"/>
    <property type="project" value="UniProtKB"/>
</dbReference>
<dbReference type="CDD" id="cd01999">
    <property type="entry name" value="ASS"/>
    <property type="match status" value="1"/>
</dbReference>
<dbReference type="FunFam" id="3.40.50.620:FF:000019">
    <property type="entry name" value="Argininosuccinate synthase"/>
    <property type="match status" value="1"/>
</dbReference>
<dbReference type="FunFam" id="3.90.1260.10:FF:000005">
    <property type="entry name" value="Argininosuccinate synthase 1"/>
    <property type="match status" value="1"/>
</dbReference>
<dbReference type="Gene3D" id="3.90.1260.10">
    <property type="entry name" value="Argininosuccinate synthetase, chain A, domain 2"/>
    <property type="match status" value="1"/>
</dbReference>
<dbReference type="Gene3D" id="3.40.50.620">
    <property type="entry name" value="HUPs"/>
    <property type="match status" value="1"/>
</dbReference>
<dbReference type="Gene3D" id="1.20.5.470">
    <property type="entry name" value="Single helix bin"/>
    <property type="match status" value="1"/>
</dbReference>
<dbReference type="HAMAP" id="MF_00005">
    <property type="entry name" value="Arg_succ_synth_type1"/>
    <property type="match status" value="1"/>
</dbReference>
<dbReference type="InterPro" id="IPR048268">
    <property type="entry name" value="Arginosuc_syn_C"/>
</dbReference>
<dbReference type="InterPro" id="IPR048267">
    <property type="entry name" value="Arginosuc_syn_N"/>
</dbReference>
<dbReference type="InterPro" id="IPR001518">
    <property type="entry name" value="Arginosuc_synth"/>
</dbReference>
<dbReference type="InterPro" id="IPR018223">
    <property type="entry name" value="Arginosuc_synth_CS"/>
</dbReference>
<dbReference type="InterPro" id="IPR023434">
    <property type="entry name" value="Arginosuc_synth_type_1_subfam"/>
</dbReference>
<dbReference type="InterPro" id="IPR024074">
    <property type="entry name" value="AS_cat/multimer_dom_body"/>
</dbReference>
<dbReference type="InterPro" id="IPR014729">
    <property type="entry name" value="Rossmann-like_a/b/a_fold"/>
</dbReference>
<dbReference type="NCBIfam" id="TIGR00032">
    <property type="entry name" value="argG"/>
    <property type="match status" value="1"/>
</dbReference>
<dbReference type="NCBIfam" id="NF001770">
    <property type="entry name" value="PRK00509.1"/>
    <property type="match status" value="1"/>
</dbReference>
<dbReference type="PANTHER" id="PTHR11587">
    <property type="entry name" value="ARGININOSUCCINATE SYNTHASE"/>
    <property type="match status" value="1"/>
</dbReference>
<dbReference type="PANTHER" id="PTHR11587:SF2">
    <property type="entry name" value="ARGININOSUCCINATE SYNTHASE"/>
    <property type="match status" value="1"/>
</dbReference>
<dbReference type="Pfam" id="PF20979">
    <property type="entry name" value="Arginosuc_syn_C"/>
    <property type="match status" value="1"/>
</dbReference>
<dbReference type="Pfam" id="PF00764">
    <property type="entry name" value="Arginosuc_synth"/>
    <property type="match status" value="1"/>
</dbReference>
<dbReference type="SUPFAM" id="SSF52402">
    <property type="entry name" value="Adenine nucleotide alpha hydrolases-like"/>
    <property type="match status" value="1"/>
</dbReference>
<dbReference type="SUPFAM" id="SSF69864">
    <property type="entry name" value="Argininosuccinate synthetase, C-terminal domain"/>
    <property type="match status" value="1"/>
</dbReference>
<dbReference type="PROSITE" id="PS00564">
    <property type="entry name" value="ARGININOSUCCIN_SYN_1"/>
    <property type="match status" value="1"/>
</dbReference>
<dbReference type="PROSITE" id="PS00565">
    <property type="entry name" value="ARGININOSUCCIN_SYN_2"/>
    <property type="match status" value="1"/>
</dbReference>
<keyword id="KW-0028">Amino-acid biosynthesis</keyword>
<keyword id="KW-0055">Arginine biosynthesis</keyword>
<keyword id="KW-0067">ATP-binding</keyword>
<keyword id="KW-0963">Cytoplasm</keyword>
<keyword id="KW-0436">Ligase</keyword>
<keyword id="KW-0547">Nucleotide-binding</keyword>
<keyword id="KW-0597">Phosphoprotein</keyword>
<keyword id="KW-1185">Reference proteome</keyword>
<keyword id="KW-0835">Urea cycle</keyword>
<protein>
    <recommendedName>
        <fullName evidence="2">Argininosuccinate synthase</fullName>
        <ecNumber evidence="1">6.3.4.5</ecNumber>
    </recommendedName>
    <alternativeName>
        <fullName>Citrulline--aspartate ligase</fullName>
    </alternativeName>
</protein>
<name>ASSY_XENLA</name>
<evidence type="ECO:0000250" key="1">
    <source>
        <dbReference type="UniProtKB" id="P00966"/>
    </source>
</evidence>
<evidence type="ECO:0000305" key="2"/>
<organism>
    <name type="scientific">Xenopus laevis</name>
    <name type="common">African clawed frog</name>
    <dbReference type="NCBI Taxonomy" id="8355"/>
    <lineage>
        <taxon>Eukaryota</taxon>
        <taxon>Metazoa</taxon>
        <taxon>Chordata</taxon>
        <taxon>Craniata</taxon>
        <taxon>Vertebrata</taxon>
        <taxon>Euteleostomi</taxon>
        <taxon>Amphibia</taxon>
        <taxon>Batrachia</taxon>
        <taxon>Anura</taxon>
        <taxon>Pipoidea</taxon>
        <taxon>Pipidae</taxon>
        <taxon>Xenopodinae</taxon>
        <taxon>Xenopus</taxon>
        <taxon>Xenopus</taxon>
    </lineage>
</organism>